<proteinExistence type="inferred from homology"/>
<keyword id="KW-0150">Chloroplast</keyword>
<keyword id="KW-0507">mRNA processing</keyword>
<keyword id="KW-0934">Plastid</keyword>
<keyword id="KW-0694">RNA-binding</keyword>
<keyword id="KW-0819">tRNA processing</keyword>
<gene>
    <name evidence="1" type="primary">matK</name>
</gene>
<sequence length="517" mass="61790">MFQMKEYQIHLELDRSQQHNFLYPLLFREYIYALAHDHGLNRSTIPLENGGYDNKSSSLSVKRLISRTYQRIHLSIYAKDSNPNQFIGHNNQFYSQMISEGFSVIVEIPFSLRLVAFLEGKEKEMAKSHNFQSIHSIFPFFENNFSHLHYVLDVLIPYPIRPEILVRTFRYWVKDASSLHLLRFFLHEYFNWNSLITPKKSNSIFSTSKPRFFLFLYNSHVYEYESIFFFLRNQSSHLRSTSSGLLFERISFYGKVEDLVQVFVNDFQDNLWLFKHPIMHYVRYQGKSVLASKDMPLLMNKWKYYLVNLWQWHFHVWSQPGRIHINHLYKDYIYFLGYLSRGRLNTLVVRSQMLENAFLIDNAMKQFETTVPIIPLIGSLTTARFCNSLGHPISKPTWADSSDSYIIDRFMRICRNLSHYHSGSSKKKSLYRIKYILRVSCVKSLVRKHKSTVRVFLKRLGSEFLEEFFTEEEHVLSLIFPRAVFPSRRLYRGRVWYFDIICINDLVNHDKFEIFPN</sequence>
<organism>
    <name type="scientific">Acer pseudoplatanus</name>
    <name type="common">Sycamore maple</name>
    <dbReference type="NCBI Taxonomy" id="4026"/>
    <lineage>
        <taxon>Eukaryota</taxon>
        <taxon>Viridiplantae</taxon>
        <taxon>Streptophyta</taxon>
        <taxon>Embryophyta</taxon>
        <taxon>Tracheophyta</taxon>
        <taxon>Spermatophyta</taxon>
        <taxon>Magnoliopsida</taxon>
        <taxon>eudicotyledons</taxon>
        <taxon>Gunneridae</taxon>
        <taxon>Pentapetalae</taxon>
        <taxon>rosids</taxon>
        <taxon>malvids</taxon>
        <taxon>Sapindales</taxon>
        <taxon>Sapindaceae</taxon>
        <taxon>Hippocastanoideae</taxon>
        <taxon>Acereae</taxon>
        <taxon>Acer</taxon>
    </lineage>
</organism>
<comment type="function">
    <text evidence="1">Usually encoded in the trnK tRNA gene intron. Probably assists in splicing its own and other chloroplast group II introns.</text>
</comment>
<comment type="subcellular location">
    <subcellularLocation>
        <location>Plastid</location>
        <location>Chloroplast</location>
    </subcellularLocation>
</comment>
<comment type="similarity">
    <text evidence="1">Belongs to the intron maturase 2 family. MatK subfamily.</text>
</comment>
<protein>
    <recommendedName>
        <fullName evidence="1">Maturase K</fullName>
    </recommendedName>
    <alternativeName>
        <fullName evidence="1">Intron maturase</fullName>
    </alternativeName>
</protein>
<accession>Q8SE90</accession>
<accession>Q8SLH3</accession>
<accession>Q8SLH5</accession>
<name>MATK_ACEPS</name>
<feature type="chain" id="PRO_0000143204" description="Maturase K">
    <location>
        <begin position="1"/>
        <end position="517"/>
    </location>
</feature>
<feature type="sequence variant" description="In strain: Isolate 22 AP 01.">
    <original>E</original>
    <variation>G</variation>
    <location>
        <position position="188"/>
    </location>
</feature>
<reference key="1">
    <citation type="submission" date="2002-03" db="EMBL/GenBank/DDBJ databases">
        <title>Chloroplast DNA polymorphism observed in European populations of Acer pseudoplatanus L.: inferences on glacial refugia and reimmigration routes.</title>
        <authorList>
            <person name="Bittkau C."/>
            <person name="Mueller-Starck G."/>
        </authorList>
    </citation>
    <scope>NUCLEOTIDE SEQUENCE [GENOMIC DNA]</scope>
    <source>
        <strain>Isolate 13b AP 11</strain>
        <strain>Isolate 14 AP 37</strain>
        <strain>Isolate 18 AP 02</strain>
        <strain>Isolate 20 AP 01</strain>
        <strain>Isolate 22 AP 01</strain>
    </source>
</reference>
<dbReference type="EMBL" id="AJ438780">
    <property type="protein sequence ID" value="CAD27624.1"/>
    <property type="molecule type" value="Genomic_DNA"/>
</dbReference>
<dbReference type="EMBL" id="AJ438782">
    <property type="protein sequence ID" value="CAD27626.1"/>
    <property type="molecule type" value="Genomic_DNA"/>
</dbReference>
<dbReference type="EMBL" id="AJ438783">
    <property type="protein sequence ID" value="CAD27627.1"/>
    <property type="molecule type" value="Genomic_DNA"/>
</dbReference>
<dbReference type="EMBL" id="AJ438784">
    <property type="protein sequence ID" value="CAD27628.1"/>
    <property type="molecule type" value="Genomic_DNA"/>
</dbReference>
<dbReference type="EMBL" id="AJ438785">
    <property type="protein sequence ID" value="CAD27629.1"/>
    <property type="molecule type" value="Genomic_DNA"/>
</dbReference>
<dbReference type="GO" id="GO:0009507">
    <property type="term" value="C:chloroplast"/>
    <property type="evidence" value="ECO:0007669"/>
    <property type="project" value="UniProtKB-SubCell"/>
</dbReference>
<dbReference type="GO" id="GO:0003723">
    <property type="term" value="F:RNA binding"/>
    <property type="evidence" value="ECO:0007669"/>
    <property type="project" value="UniProtKB-KW"/>
</dbReference>
<dbReference type="GO" id="GO:0006397">
    <property type="term" value="P:mRNA processing"/>
    <property type="evidence" value="ECO:0007669"/>
    <property type="project" value="UniProtKB-KW"/>
</dbReference>
<dbReference type="GO" id="GO:0008380">
    <property type="term" value="P:RNA splicing"/>
    <property type="evidence" value="ECO:0007669"/>
    <property type="project" value="UniProtKB-UniRule"/>
</dbReference>
<dbReference type="GO" id="GO:0008033">
    <property type="term" value="P:tRNA processing"/>
    <property type="evidence" value="ECO:0007669"/>
    <property type="project" value="UniProtKB-KW"/>
</dbReference>
<dbReference type="HAMAP" id="MF_01390">
    <property type="entry name" value="MatK"/>
    <property type="match status" value="1"/>
</dbReference>
<dbReference type="InterPro" id="IPR024937">
    <property type="entry name" value="Domain_X"/>
</dbReference>
<dbReference type="InterPro" id="IPR002866">
    <property type="entry name" value="Maturase_MatK"/>
</dbReference>
<dbReference type="InterPro" id="IPR024942">
    <property type="entry name" value="Maturase_MatK_N"/>
</dbReference>
<dbReference type="PANTHER" id="PTHR34811">
    <property type="entry name" value="MATURASE K"/>
    <property type="match status" value="1"/>
</dbReference>
<dbReference type="PANTHER" id="PTHR34811:SF1">
    <property type="entry name" value="MATURASE K"/>
    <property type="match status" value="1"/>
</dbReference>
<dbReference type="Pfam" id="PF01348">
    <property type="entry name" value="Intron_maturas2"/>
    <property type="match status" value="1"/>
</dbReference>
<dbReference type="Pfam" id="PF01824">
    <property type="entry name" value="MatK_N"/>
    <property type="match status" value="1"/>
</dbReference>
<evidence type="ECO:0000255" key="1">
    <source>
        <dbReference type="HAMAP-Rule" id="MF_01390"/>
    </source>
</evidence>
<geneLocation type="chloroplast"/>